<name>PYRC_AZOVD</name>
<comment type="function">
    <text evidence="1">Catalyzes the reversible cyclization of carbamoyl aspartate to dihydroorotate.</text>
</comment>
<comment type="catalytic activity">
    <reaction evidence="1">
        <text>(S)-dihydroorotate + H2O = N-carbamoyl-L-aspartate + H(+)</text>
        <dbReference type="Rhea" id="RHEA:24296"/>
        <dbReference type="ChEBI" id="CHEBI:15377"/>
        <dbReference type="ChEBI" id="CHEBI:15378"/>
        <dbReference type="ChEBI" id="CHEBI:30864"/>
        <dbReference type="ChEBI" id="CHEBI:32814"/>
        <dbReference type="EC" id="3.5.2.3"/>
    </reaction>
</comment>
<comment type="cofactor">
    <cofactor evidence="1">
        <name>Zn(2+)</name>
        <dbReference type="ChEBI" id="CHEBI:29105"/>
    </cofactor>
    <text evidence="1">Binds 2 Zn(2+) ions per subunit.</text>
</comment>
<comment type="pathway">
    <text evidence="1">Pyrimidine metabolism; UMP biosynthesis via de novo pathway; (S)-dihydroorotate from bicarbonate: step 3/3.</text>
</comment>
<comment type="subunit">
    <text evidence="1">Homodimer.</text>
</comment>
<comment type="similarity">
    <text evidence="1">Belongs to the metallo-dependent hydrolases superfamily. DHOase family. Class II DHOase subfamily.</text>
</comment>
<accession>C1DQV1</accession>
<sequence length="348" mass="38856">MPDRLILLRPDDWHIHLRDGAALSRTVTDAARTFGRAIVMPNLVPPVRNASEAGAYRQRIQAARPADSRFEPLMTLYLTDKTSPEDIRTAKAQGFVHAAKLYPAGATTNSDAGVTRIDNIFPILEAMAEAGLPLLVHGEVTHSEVDVFDREKRFIDENLVRIIEHFPTLKVVFEHITTRDAVQFVETSSSNVGATITAHHLLYNRNHMLVGGIRPHFYCLPILKRRTHQEALLDAATSGNTKFFLGTDSAPHARHAKEAACGCAGCYTAYAAIELYAEAFEQRSALDRLEAFASHHGADFYGIPRNTDHITLIREEWTAPACMTFGEHSLVPLRAGEKLRWRLLEEKM</sequence>
<keyword id="KW-0378">Hydrolase</keyword>
<keyword id="KW-0479">Metal-binding</keyword>
<keyword id="KW-0665">Pyrimidine biosynthesis</keyword>
<keyword id="KW-0862">Zinc</keyword>
<evidence type="ECO:0000255" key="1">
    <source>
        <dbReference type="HAMAP-Rule" id="MF_00219"/>
    </source>
</evidence>
<feature type="chain" id="PRO_1000204244" description="Dihydroorotase">
    <location>
        <begin position="1"/>
        <end position="348"/>
    </location>
</feature>
<feature type="active site" evidence="1">
    <location>
        <position position="248"/>
    </location>
</feature>
<feature type="binding site" evidence="1">
    <location>
        <position position="14"/>
    </location>
    <ligand>
        <name>Zn(2+)</name>
        <dbReference type="ChEBI" id="CHEBI:29105"/>
        <label>1</label>
    </ligand>
</feature>
<feature type="binding site" evidence="1">
    <location>
        <begin position="16"/>
        <end position="18"/>
    </location>
    <ligand>
        <name>substrate</name>
    </ligand>
</feature>
<feature type="binding site" evidence="1">
    <location>
        <position position="16"/>
    </location>
    <ligand>
        <name>Zn(2+)</name>
        <dbReference type="ChEBI" id="CHEBI:29105"/>
        <label>1</label>
    </ligand>
</feature>
<feature type="binding site" evidence="1">
    <location>
        <position position="42"/>
    </location>
    <ligand>
        <name>substrate</name>
    </ligand>
</feature>
<feature type="binding site" description="via carbamate group" evidence="1">
    <location>
        <position position="100"/>
    </location>
    <ligand>
        <name>Zn(2+)</name>
        <dbReference type="ChEBI" id="CHEBI:29105"/>
        <label>1</label>
    </ligand>
</feature>
<feature type="binding site" description="via carbamate group" evidence="1">
    <location>
        <position position="100"/>
    </location>
    <ligand>
        <name>Zn(2+)</name>
        <dbReference type="ChEBI" id="CHEBI:29105"/>
        <label>2</label>
    </ligand>
</feature>
<feature type="binding site" evidence="1">
    <location>
        <position position="137"/>
    </location>
    <ligand>
        <name>substrate</name>
    </ligand>
</feature>
<feature type="binding site" evidence="1">
    <location>
        <position position="137"/>
    </location>
    <ligand>
        <name>Zn(2+)</name>
        <dbReference type="ChEBI" id="CHEBI:29105"/>
        <label>2</label>
    </ligand>
</feature>
<feature type="binding site" evidence="1">
    <location>
        <position position="175"/>
    </location>
    <ligand>
        <name>Zn(2+)</name>
        <dbReference type="ChEBI" id="CHEBI:29105"/>
        <label>2</label>
    </ligand>
</feature>
<feature type="binding site" evidence="1">
    <location>
        <position position="220"/>
    </location>
    <ligand>
        <name>substrate</name>
    </ligand>
</feature>
<feature type="binding site" evidence="1">
    <location>
        <position position="248"/>
    </location>
    <ligand>
        <name>Zn(2+)</name>
        <dbReference type="ChEBI" id="CHEBI:29105"/>
        <label>1</label>
    </ligand>
</feature>
<feature type="binding site" evidence="1">
    <location>
        <position position="252"/>
    </location>
    <ligand>
        <name>substrate</name>
    </ligand>
</feature>
<feature type="binding site" evidence="1">
    <location>
        <position position="264"/>
    </location>
    <ligand>
        <name>substrate</name>
    </ligand>
</feature>
<feature type="modified residue" description="N6-carboxylysine" evidence="1">
    <location>
        <position position="100"/>
    </location>
</feature>
<protein>
    <recommendedName>
        <fullName evidence="1">Dihydroorotase</fullName>
        <shortName evidence="1">DHOase</shortName>
        <ecNumber evidence="1">3.5.2.3</ecNumber>
    </recommendedName>
</protein>
<organism>
    <name type="scientific">Azotobacter vinelandii (strain DJ / ATCC BAA-1303)</name>
    <dbReference type="NCBI Taxonomy" id="322710"/>
    <lineage>
        <taxon>Bacteria</taxon>
        <taxon>Pseudomonadati</taxon>
        <taxon>Pseudomonadota</taxon>
        <taxon>Gammaproteobacteria</taxon>
        <taxon>Pseudomonadales</taxon>
        <taxon>Pseudomonadaceae</taxon>
        <taxon>Azotobacter</taxon>
    </lineage>
</organism>
<dbReference type="EC" id="3.5.2.3" evidence="1"/>
<dbReference type="EMBL" id="CP001157">
    <property type="protein sequence ID" value="ACO77624.1"/>
    <property type="molecule type" value="Genomic_DNA"/>
</dbReference>
<dbReference type="RefSeq" id="WP_012700043.1">
    <property type="nucleotide sequence ID" value="NC_012560.1"/>
</dbReference>
<dbReference type="SMR" id="C1DQV1"/>
<dbReference type="STRING" id="322710.Avin_14070"/>
<dbReference type="EnsemblBacteria" id="ACO77624">
    <property type="protein sequence ID" value="ACO77624"/>
    <property type="gene ID" value="Avin_14070"/>
</dbReference>
<dbReference type="GeneID" id="88184707"/>
<dbReference type="KEGG" id="avn:Avin_14070"/>
<dbReference type="eggNOG" id="COG0418">
    <property type="taxonomic scope" value="Bacteria"/>
</dbReference>
<dbReference type="HOGENOM" id="CLU_041558_1_0_6"/>
<dbReference type="OrthoDB" id="9808095at2"/>
<dbReference type="UniPathway" id="UPA00070">
    <property type="reaction ID" value="UER00117"/>
</dbReference>
<dbReference type="Proteomes" id="UP000002424">
    <property type="component" value="Chromosome"/>
</dbReference>
<dbReference type="GO" id="GO:0005829">
    <property type="term" value="C:cytosol"/>
    <property type="evidence" value="ECO:0007669"/>
    <property type="project" value="TreeGrafter"/>
</dbReference>
<dbReference type="GO" id="GO:0004151">
    <property type="term" value="F:dihydroorotase activity"/>
    <property type="evidence" value="ECO:0007669"/>
    <property type="project" value="UniProtKB-UniRule"/>
</dbReference>
<dbReference type="GO" id="GO:0008270">
    <property type="term" value="F:zinc ion binding"/>
    <property type="evidence" value="ECO:0007669"/>
    <property type="project" value="UniProtKB-UniRule"/>
</dbReference>
<dbReference type="GO" id="GO:0006207">
    <property type="term" value="P:'de novo' pyrimidine nucleobase biosynthetic process"/>
    <property type="evidence" value="ECO:0007669"/>
    <property type="project" value="TreeGrafter"/>
</dbReference>
<dbReference type="GO" id="GO:0044205">
    <property type="term" value="P:'de novo' UMP biosynthetic process"/>
    <property type="evidence" value="ECO:0007669"/>
    <property type="project" value="UniProtKB-UniRule"/>
</dbReference>
<dbReference type="CDD" id="cd01294">
    <property type="entry name" value="DHOase"/>
    <property type="match status" value="1"/>
</dbReference>
<dbReference type="FunFam" id="3.20.20.140:FF:000006">
    <property type="entry name" value="Dihydroorotase"/>
    <property type="match status" value="1"/>
</dbReference>
<dbReference type="Gene3D" id="3.20.20.140">
    <property type="entry name" value="Metal-dependent hydrolases"/>
    <property type="match status" value="1"/>
</dbReference>
<dbReference type="HAMAP" id="MF_00219">
    <property type="entry name" value="PyrC_classII"/>
    <property type="match status" value="1"/>
</dbReference>
<dbReference type="InterPro" id="IPR006680">
    <property type="entry name" value="Amidohydro-rel"/>
</dbReference>
<dbReference type="InterPro" id="IPR004721">
    <property type="entry name" value="DHOdimr"/>
</dbReference>
<dbReference type="InterPro" id="IPR002195">
    <property type="entry name" value="Dihydroorotase_CS"/>
</dbReference>
<dbReference type="InterPro" id="IPR032466">
    <property type="entry name" value="Metal_Hydrolase"/>
</dbReference>
<dbReference type="NCBIfam" id="TIGR00856">
    <property type="entry name" value="pyrC_dimer"/>
    <property type="match status" value="1"/>
</dbReference>
<dbReference type="PANTHER" id="PTHR43137">
    <property type="entry name" value="DIHYDROOROTASE"/>
    <property type="match status" value="1"/>
</dbReference>
<dbReference type="PANTHER" id="PTHR43137:SF1">
    <property type="entry name" value="DIHYDROOROTASE"/>
    <property type="match status" value="1"/>
</dbReference>
<dbReference type="Pfam" id="PF01979">
    <property type="entry name" value="Amidohydro_1"/>
    <property type="match status" value="1"/>
</dbReference>
<dbReference type="PIRSF" id="PIRSF001237">
    <property type="entry name" value="DHOdimr"/>
    <property type="match status" value="1"/>
</dbReference>
<dbReference type="SUPFAM" id="SSF51556">
    <property type="entry name" value="Metallo-dependent hydrolases"/>
    <property type="match status" value="1"/>
</dbReference>
<dbReference type="PROSITE" id="PS00482">
    <property type="entry name" value="DIHYDROOROTASE_1"/>
    <property type="match status" value="1"/>
</dbReference>
<dbReference type="PROSITE" id="PS00483">
    <property type="entry name" value="DIHYDROOROTASE_2"/>
    <property type="match status" value="1"/>
</dbReference>
<reference key="1">
    <citation type="journal article" date="2009" name="J. Bacteriol.">
        <title>Genome sequence of Azotobacter vinelandii, an obligate aerobe specialized to support diverse anaerobic metabolic processes.</title>
        <authorList>
            <person name="Setubal J.C."/>
            <person name="Dos Santos P."/>
            <person name="Goldman B.S."/>
            <person name="Ertesvaag H."/>
            <person name="Espin G."/>
            <person name="Rubio L.M."/>
            <person name="Valla S."/>
            <person name="Almeida N.F."/>
            <person name="Balasubramanian D."/>
            <person name="Cromes L."/>
            <person name="Curatti L."/>
            <person name="Du Z."/>
            <person name="Godsy E."/>
            <person name="Goodner B."/>
            <person name="Hellner-Burris K."/>
            <person name="Hernandez J.A."/>
            <person name="Houmiel K."/>
            <person name="Imperial J."/>
            <person name="Kennedy C."/>
            <person name="Larson T.J."/>
            <person name="Latreille P."/>
            <person name="Ligon L.S."/>
            <person name="Lu J."/>
            <person name="Maerk M."/>
            <person name="Miller N.M."/>
            <person name="Norton S."/>
            <person name="O'Carroll I.P."/>
            <person name="Paulsen I."/>
            <person name="Raulfs E.C."/>
            <person name="Roemer R."/>
            <person name="Rosser J."/>
            <person name="Segura D."/>
            <person name="Slater S."/>
            <person name="Stricklin S.L."/>
            <person name="Studholme D.J."/>
            <person name="Sun J."/>
            <person name="Viana C.J."/>
            <person name="Wallin E."/>
            <person name="Wang B."/>
            <person name="Wheeler C."/>
            <person name="Zhu H."/>
            <person name="Dean D.R."/>
            <person name="Dixon R."/>
            <person name="Wood D."/>
        </authorList>
    </citation>
    <scope>NUCLEOTIDE SEQUENCE [LARGE SCALE GENOMIC DNA]</scope>
    <source>
        <strain>DJ / ATCC BAA-1303</strain>
    </source>
</reference>
<proteinExistence type="inferred from homology"/>
<gene>
    <name evidence="1" type="primary">pyrC</name>
    <name type="ordered locus">Avin_14070</name>
</gene>